<dbReference type="EMBL" id="AJ965256">
    <property type="protein sequence ID" value="CAI82654.1"/>
    <property type="molecule type" value="Genomic_DNA"/>
</dbReference>
<dbReference type="RefSeq" id="WP_011309010.1">
    <property type="nucleotide sequence ID" value="NC_007356.1"/>
</dbReference>
<dbReference type="SMR" id="Q3ZZN4"/>
<dbReference type="KEGG" id="deh:cbdbA453"/>
<dbReference type="HOGENOM" id="CLU_065464_1_2_0"/>
<dbReference type="Proteomes" id="UP000000433">
    <property type="component" value="Chromosome"/>
</dbReference>
<dbReference type="GO" id="GO:0022625">
    <property type="term" value="C:cytosolic large ribosomal subunit"/>
    <property type="evidence" value="ECO:0007669"/>
    <property type="project" value="TreeGrafter"/>
</dbReference>
<dbReference type="GO" id="GO:0019843">
    <property type="term" value="F:rRNA binding"/>
    <property type="evidence" value="ECO:0007669"/>
    <property type="project" value="UniProtKB-UniRule"/>
</dbReference>
<dbReference type="GO" id="GO:0003735">
    <property type="term" value="F:structural constituent of ribosome"/>
    <property type="evidence" value="ECO:0007669"/>
    <property type="project" value="InterPro"/>
</dbReference>
<dbReference type="GO" id="GO:0002181">
    <property type="term" value="P:cytoplasmic translation"/>
    <property type="evidence" value="ECO:0007669"/>
    <property type="project" value="TreeGrafter"/>
</dbReference>
<dbReference type="FunFam" id="3.90.930.12:FF:000002">
    <property type="entry name" value="50S ribosomal protein L6"/>
    <property type="match status" value="1"/>
</dbReference>
<dbReference type="Gene3D" id="3.90.930.12">
    <property type="entry name" value="Ribosomal protein L6, alpha-beta domain"/>
    <property type="match status" value="2"/>
</dbReference>
<dbReference type="HAMAP" id="MF_01365_B">
    <property type="entry name" value="Ribosomal_uL6_B"/>
    <property type="match status" value="1"/>
</dbReference>
<dbReference type="InterPro" id="IPR000702">
    <property type="entry name" value="Ribosomal_uL6-like"/>
</dbReference>
<dbReference type="InterPro" id="IPR036789">
    <property type="entry name" value="Ribosomal_uL6-like_a/b-dom_sf"/>
</dbReference>
<dbReference type="InterPro" id="IPR020040">
    <property type="entry name" value="Ribosomal_uL6_a/b-dom"/>
</dbReference>
<dbReference type="InterPro" id="IPR019906">
    <property type="entry name" value="Ribosomal_uL6_bac-type"/>
</dbReference>
<dbReference type="NCBIfam" id="TIGR03654">
    <property type="entry name" value="L6_bact"/>
    <property type="match status" value="1"/>
</dbReference>
<dbReference type="PANTHER" id="PTHR11655">
    <property type="entry name" value="60S/50S RIBOSOMAL PROTEIN L6/L9"/>
    <property type="match status" value="1"/>
</dbReference>
<dbReference type="PANTHER" id="PTHR11655:SF14">
    <property type="entry name" value="LARGE RIBOSOMAL SUBUNIT PROTEIN UL6M"/>
    <property type="match status" value="1"/>
</dbReference>
<dbReference type="Pfam" id="PF00347">
    <property type="entry name" value="Ribosomal_L6"/>
    <property type="match status" value="2"/>
</dbReference>
<dbReference type="PIRSF" id="PIRSF002162">
    <property type="entry name" value="Ribosomal_L6"/>
    <property type="match status" value="1"/>
</dbReference>
<dbReference type="PRINTS" id="PR00059">
    <property type="entry name" value="RIBOSOMALL6"/>
</dbReference>
<dbReference type="SUPFAM" id="SSF56053">
    <property type="entry name" value="Ribosomal protein L6"/>
    <property type="match status" value="2"/>
</dbReference>
<gene>
    <name evidence="1" type="primary">rplF</name>
    <name type="ordered locus">cbdbA453</name>
</gene>
<keyword id="KW-0687">Ribonucleoprotein</keyword>
<keyword id="KW-0689">Ribosomal protein</keyword>
<keyword id="KW-0694">RNA-binding</keyword>
<keyword id="KW-0699">rRNA-binding</keyword>
<feature type="chain" id="PRO_0000260862" description="Large ribosomal subunit protein uL6">
    <location>
        <begin position="1"/>
        <end position="182"/>
    </location>
</feature>
<organism>
    <name type="scientific">Dehalococcoides mccartyi (strain CBDB1)</name>
    <dbReference type="NCBI Taxonomy" id="255470"/>
    <lineage>
        <taxon>Bacteria</taxon>
        <taxon>Bacillati</taxon>
        <taxon>Chloroflexota</taxon>
        <taxon>Dehalococcoidia</taxon>
        <taxon>Dehalococcoidales</taxon>
        <taxon>Dehalococcoidaceae</taxon>
        <taxon>Dehalococcoides</taxon>
    </lineage>
</organism>
<evidence type="ECO:0000255" key="1">
    <source>
        <dbReference type="HAMAP-Rule" id="MF_01365"/>
    </source>
</evidence>
<evidence type="ECO:0000305" key="2"/>
<accession>Q3ZZN4</accession>
<name>RL6_DEHMC</name>
<comment type="function">
    <text evidence="1">This protein binds to the 23S rRNA, and is important in its secondary structure. It is located near the subunit interface in the base of the L7/L12 stalk, and near the tRNA binding site of the peptidyltransferase center.</text>
</comment>
<comment type="subunit">
    <text evidence="1">Part of the 50S ribosomal subunit.</text>
</comment>
<comment type="similarity">
    <text evidence="1">Belongs to the universal ribosomal protein uL6 family.</text>
</comment>
<protein>
    <recommendedName>
        <fullName evidence="1">Large ribosomal subunit protein uL6</fullName>
    </recommendedName>
    <alternativeName>
        <fullName evidence="2">50S ribosomal protein L6</fullName>
    </alternativeName>
</protein>
<proteinExistence type="inferred from homology"/>
<reference key="1">
    <citation type="journal article" date="2005" name="Nat. Biotechnol.">
        <title>Genome sequence of the chlorinated compound-respiring bacterium Dehalococcoides species strain CBDB1.</title>
        <authorList>
            <person name="Kube M."/>
            <person name="Beck A."/>
            <person name="Zinder S.H."/>
            <person name="Kuhl H."/>
            <person name="Reinhardt R."/>
            <person name="Adrian L."/>
        </authorList>
    </citation>
    <scope>NUCLEOTIDE SEQUENCE [LARGE SCALE GENOMIC DNA]</scope>
    <source>
        <strain>CBDB1</strain>
    </source>
</reference>
<sequence>MSRIGKMPIKVPPGIKVDINGNDVTVKGPKGTLSRSFRPEVTINREGDYLVVAPVGTDKATRSFFGLSRTLLDNMIVGVKDGFDKNLEIVGVGMRADKDGDKVVFKVGFSHSVTVAPPAGITLSVDGTTKVKVSGINKEDVGQMAAEIRSIRKPDHYMGKGIRYAGEYVRIKPGKAIGKGAK</sequence>